<gene>
    <name evidence="1" type="primary">tmk</name>
    <name type="ordered locus">VV1_3002</name>
</gene>
<keyword id="KW-0067">ATP-binding</keyword>
<keyword id="KW-0418">Kinase</keyword>
<keyword id="KW-0545">Nucleotide biosynthesis</keyword>
<keyword id="KW-0547">Nucleotide-binding</keyword>
<keyword id="KW-0808">Transferase</keyword>
<evidence type="ECO:0000255" key="1">
    <source>
        <dbReference type="HAMAP-Rule" id="MF_00165"/>
    </source>
</evidence>
<feature type="chain" id="PRO_0000155370" description="Thymidylate kinase">
    <location>
        <begin position="1"/>
        <end position="212"/>
    </location>
</feature>
<feature type="binding site" evidence="1">
    <location>
        <begin position="11"/>
        <end position="18"/>
    </location>
    <ligand>
        <name>ATP</name>
        <dbReference type="ChEBI" id="CHEBI:30616"/>
    </ligand>
</feature>
<organism>
    <name type="scientific">Vibrio vulnificus (strain CMCP6)</name>
    <dbReference type="NCBI Taxonomy" id="216895"/>
    <lineage>
        <taxon>Bacteria</taxon>
        <taxon>Pseudomonadati</taxon>
        <taxon>Pseudomonadota</taxon>
        <taxon>Gammaproteobacteria</taxon>
        <taxon>Vibrionales</taxon>
        <taxon>Vibrionaceae</taxon>
        <taxon>Vibrio</taxon>
    </lineage>
</organism>
<accession>Q8D8H5</accession>
<name>KTHY_VIBVU</name>
<sequence>MKQAKFIVIEGLEGAGKSTAIQTVLDTLRQAGINEIAQTREPGGTPLAEKMRALVKEEHPGEHLHDMTELLLLYAARVQLVENVIKPALHEGKWVVGDRHDLSSQAYQGGGRQIDATLMKNLRDTALGEFKPAFTLYMDIDPKVGLERARGRGELDRIEKMDISFFERTRQRYLELAKSDASIVTINAEQSIEQVANDIRSALNLWLEQLQD</sequence>
<protein>
    <recommendedName>
        <fullName evidence="1">Thymidylate kinase</fullName>
        <ecNumber evidence="1">2.7.4.9</ecNumber>
    </recommendedName>
    <alternativeName>
        <fullName evidence="1">dTMP kinase</fullName>
    </alternativeName>
</protein>
<proteinExistence type="inferred from homology"/>
<reference key="1">
    <citation type="submission" date="2002-12" db="EMBL/GenBank/DDBJ databases">
        <title>Complete genome sequence of Vibrio vulnificus CMCP6.</title>
        <authorList>
            <person name="Rhee J.H."/>
            <person name="Kim S.Y."/>
            <person name="Chung S.S."/>
            <person name="Kim J.J."/>
            <person name="Moon Y.H."/>
            <person name="Jeong H."/>
            <person name="Choy H.E."/>
        </authorList>
    </citation>
    <scope>NUCLEOTIDE SEQUENCE [LARGE SCALE GENOMIC DNA]</scope>
    <source>
        <strain>CMCP6</strain>
    </source>
</reference>
<comment type="function">
    <text evidence="1">Phosphorylation of dTMP to form dTDP in both de novo and salvage pathways of dTTP synthesis.</text>
</comment>
<comment type="catalytic activity">
    <reaction evidence="1">
        <text>dTMP + ATP = dTDP + ADP</text>
        <dbReference type="Rhea" id="RHEA:13517"/>
        <dbReference type="ChEBI" id="CHEBI:30616"/>
        <dbReference type="ChEBI" id="CHEBI:58369"/>
        <dbReference type="ChEBI" id="CHEBI:63528"/>
        <dbReference type="ChEBI" id="CHEBI:456216"/>
        <dbReference type="EC" id="2.7.4.9"/>
    </reaction>
</comment>
<comment type="similarity">
    <text evidence="1">Belongs to the thymidylate kinase family.</text>
</comment>
<dbReference type="EC" id="2.7.4.9" evidence="1"/>
<dbReference type="EMBL" id="AE016795">
    <property type="protein sequence ID" value="AAO11329.1"/>
    <property type="molecule type" value="Genomic_DNA"/>
</dbReference>
<dbReference type="RefSeq" id="WP_011080814.1">
    <property type="nucleotide sequence ID" value="NC_004459.3"/>
</dbReference>
<dbReference type="SMR" id="Q8D8H5"/>
<dbReference type="KEGG" id="vvu:VV1_3002"/>
<dbReference type="HOGENOM" id="CLU_049131_0_1_6"/>
<dbReference type="Proteomes" id="UP000002275">
    <property type="component" value="Chromosome 1"/>
</dbReference>
<dbReference type="GO" id="GO:0005829">
    <property type="term" value="C:cytosol"/>
    <property type="evidence" value="ECO:0007669"/>
    <property type="project" value="TreeGrafter"/>
</dbReference>
<dbReference type="GO" id="GO:0005524">
    <property type="term" value="F:ATP binding"/>
    <property type="evidence" value="ECO:0007669"/>
    <property type="project" value="UniProtKB-UniRule"/>
</dbReference>
<dbReference type="GO" id="GO:0004798">
    <property type="term" value="F:dTMP kinase activity"/>
    <property type="evidence" value="ECO:0007669"/>
    <property type="project" value="UniProtKB-UniRule"/>
</dbReference>
<dbReference type="GO" id="GO:0006233">
    <property type="term" value="P:dTDP biosynthetic process"/>
    <property type="evidence" value="ECO:0007669"/>
    <property type="project" value="InterPro"/>
</dbReference>
<dbReference type="GO" id="GO:0006235">
    <property type="term" value="P:dTTP biosynthetic process"/>
    <property type="evidence" value="ECO:0007669"/>
    <property type="project" value="UniProtKB-UniRule"/>
</dbReference>
<dbReference type="GO" id="GO:0006227">
    <property type="term" value="P:dUDP biosynthetic process"/>
    <property type="evidence" value="ECO:0007669"/>
    <property type="project" value="TreeGrafter"/>
</dbReference>
<dbReference type="CDD" id="cd01672">
    <property type="entry name" value="TMPK"/>
    <property type="match status" value="1"/>
</dbReference>
<dbReference type="FunFam" id="3.40.50.300:FF:000321">
    <property type="entry name" value="Thymidylate kinase"/>
    <property type="match status" value="1"/>
</dbReference>
<dbReference type="Gene3D" id="3.40.50.300">
    <property type="entry name" value="P-loop containing nucleotide triphosphate hydrolases"/>
    <property type="match status" value="1"/>
</dbReference>
<dbReference type="HAMAP" id="MF_00165">
    <property type="entry name" value="Thymidylate_kinase"/>
    <property type="match status" value="1"/>
</dbReference>
<dbReference type="InterPro" id="IPR027417">
    <property type="entry name" value="P-loop_NTPase"/>
</dbReference>
<dbReference type="InterPro" id="IPR039430">
    <property type="entry name" value="Thymidylate_kin-like_dom"/>
</dbReference>
<dbReference type="InterPro" id="IPR018095">
    <property type="entry name" value="Thymidylate_kin_CS"/>
</dbReference>
<dbReference type="InterPro" id="IPR018094">
    <property type="entry name" value="Thymidylate_kinase"/>
</dbReference>
<dbReference type="NCBIfam" id="TIGR00041">
    <property type="entry name" value="DTMP_kinase"/>
    <property type="match status" value="1"/>
</dbReference>
<dbReference type="PANTHER" id="PTHR10344">
    <property type="entry name" value="THYMIDYLATE KINASE"/>
    <property type="match status" value="1"/>
</dbReference>
<dbReference type="PANTHER" id="PTHR10344:SF4">
    <property type="entry name" value="UMP-CMP KINASE 2, MITOCHONDRIAL"/>
    <property type="match status" value="1"/>
</dbReference>
<dbReference type="Pfam" id="PF02223">
    <property type="entry name" value="Thymidylate_kin"/>
    <property type="match status" value="1"/>
</dbReference>
<dbReference type="SUPFAM" id="SSF52540">
    <property type="entry name" value="P-loop containing nucleoside triphosphate hydrolases"/>
    <property type="match status" value="1"/>
</dbReference>
<dbReference type="PROSITE" id="PS01331">
    <property type="entry name" value="THYMIDYLATE_KINASE"/>
    <property type="match status" value="1"/>
</dbReference>